<dbReference type="EC" id="3.1.1.4"/>
<dbReference type="EMBL" id="DQ508411">
    <property type="status" value="NOT_ANNOTATED_CDS"/>
    <property type="molecule type" value="mRNA"/>
</dbReference>
<dbReference type="SMR" id="P0C551"/>
<dbReference type="GO" id="GO:0005576">
    <property type="term" value="C:extracellular region"/>
    <property type="evidence" value="ECO:0007669"/>
    <property type="project" value="UniProtKB-SubCell"/>
</dbReference>
<dbReference type="GO" id="GO:0005509">
    <property type="term" value="F:calcium ion binding"/>
    <property type="evidence" value="ECO:0007669"/>
    <property type="project" value="InterPro"/>
</dbReference>
<dbReference type="GO" id="GO:0047498">
    <property type="term" value="F:calcium-dependent phospholipase A2 activity"/>
    <property type="evidence" value="ECO:0007669"/>
    <property type="project" value="TreeGrafter"/>
</dbReference>
<dbReference type="GO" id="GO:0005543">
    <property type="term" value="F:phospholipid binding"/>
    <property type="evidence" value="ECO:0007669"/>
    <property type="project" value="TreeGrafter"/>
</dbReference>
<dbReference type="GO" id="GO:0005102">
    <property type="term" value="F:signaling receptor binding"/>
    <property type="evidence" value="ECO:0007669"/>
    <property type="project" value="TreeGrafter"/>
</dbReference>
<dbReference type="GO" id="GO:0050482">
    <property type="term" value="P:arachidonate secretion"/>
    <property type="evidence" value="ECO:0007669"/>
    <property type="project" value="InterPro"/>
</dbReference>
<dbReference type="GO" id="GO:0006633">
    <property type="term" value="P:fatty acid biosynthetic process"/>
    <property type="evidence" value="ECO:0007669"/>
    <property type="project" value="TreeGrafter"/>
</dbReference>
<dbReference type="GO" id="GO:0016042">
    <property type="term" value="P:lipid catabolic process"/>
    <property type="evidence" value="ECO:0007669"/>
    <property type="project" value="UniProtKB-KW"/>
</dbReference>
<dbReference type="GO" id="GO:0006644">
    <property type="term" value="P:phospholipid metabolic process"/>
    <property type="evidence" value="ECO:0007669"/>
    <property type="project" value="InterPro"/>
</dbReference>
<dbReference type="GO" id="GO:0048146">
    <property type="term" value="P:positive regulation of fibroblast proliferation"/>
    <property type="evidence" value="ECO:0007669"/>
    <property type="project" value="TreeGrafter"/>
</dbReference>
<dbReference type="CDD" id="cd00125">
    <property type="entry name" value="PLA2c"/>
    <property type="match status" value="1"/>
</dbReference>
<dbReference type="FunFam" id="1.20.90.10:FF:000007">
    <property type="entry name" value="Acidic phospholipase A2"/>
    <property type="match status" value="1"/>
</dbReference>
<dbReference type="Gene3D" id="1.20.90.10">
    <property type="entry name" value="Phospholipase A2 domain"/>
    <property type="match status" value="1"/>
</dbReference>
<dbReference type="InterPro" id="IPR001211">
    <property type="entry name" value="PLipase_A2"/>
</dbReference>
<dbReference type="InterPro" id="IPR033112">
    <property type="entry name" value="PLipase_A2_Asp_AS"/>
</dbReference>
<dbReference type="InterPro" id="IPR016090">
    <property type="entry name" value="PLipase_A2_dom"/>
</dbReference>
<dbReference type="InterPro" id="IPR036444">
    <property type="entry name" value="PLipase_A2_dom_sf"/>
</dbReference>
<dbReference type="InterPro" id="IPR033113">
    <property type="entry name" value="PLipase_A2_His_AS"/>
</dbReference>
<dbReference type="PANTHER" id="PTHR11716:SF94">
    <property type="entry name" value="PHOSPHOLIPASE A2"/>
    <property type="match status" value="1"/>
</dbReference>
<dbReference type="PANTHER" id="PTHR11716">
    <property type="entry name" value="PHOSPHOLIPASE A2 FAMILY MEMBER"/>
    <property type="match status" value="1"/>
</dbReference>
<dbReference type="Pfam" id="PF00068">
    <property type="entry name" value="Phospholip_A2_1"/>
    <property type="match status" value="1"/>
</dbReference>
<dbReference type="PRINTS" id="PR00389">
    <property type="entry name" value="PHPHLIPASEA2"/>
</dbReference>
<dbReference type="SMART" id="SM00085">
    <property type="entry name" value="PA2c"/>
    <property type="match status" value="1"/>
</dbReference>
<dbReference type="SUPFAM" id="SSF48619">
    <property type="entry name" value="Phospholipase A2, PLA2"/>
    <property type="match status" value="1"/>
</dbReference>
<dbReference type="PROSITE" id="PS00119">
    <property type="entry name" value="PA2_ASP"/>
    <property type="match status" value="1"/>
</dbReference>
<dbReference type="PROSITE" id="PS00118">
    <property type="entry name" value="PA2_HIS"/>
    <property type="match status" value="1"/>
</dbReference>
<sequence length="142" mass="15817">AVCVSLLGASIIPPQPLDLLQFNEMIECTIPGSFPLLDYMDYGCYCGTGGRGTPVDALDRCCKEHDDCYAQIKENPKCSSLLNVPYVKQYSYTCSEGNLTCSADNDECAAFICNCDRTAALCFAEVPYKRRNFRIDYKSRCQ</sequence>
<keyword id="KW-0106">Calcium</keyword>
<keyword id="KW-1015">Disulfide bond</keyword>
<keyword id="KW-0378">Hydrolase</keyword>
<keyword id="KW-0442">Lipid degradation</keyword>
<keyword id="KW-0443">Lipid metabolism</keyword>
<keyword id="KW-0479">Metal-binding</keyword>
<keyword id="KW-0964">Secreted</keyword>
<keyword id="KW-0732">Signal</keyword>
<evidence type="ECO:0000250" key="1"/>
<evidence type="ECO:0000255" key="2">
    <source>
        <dbReference type="PROSITE-ProRule" id="PRU10035"/>
    </source>
</evidence>
<evidence type="ECO:0000255" key="3">
    <source>
        <dbReference type="PROSITE-ProRule" id="PRU10036"/>
    </source>
</evidence>
<evidence type="ECO:0000269" key="4">
    <source>
    </source>
</evidence>
<evidence type="ECO:0000305" key="5"/>
<evidence type="ECO:0000305" key="6">
    <source>
    </source>
</evidence>
<name>PA2A_BUNFA</name>
<proteinExistence type="evidence at transcript level"/>
<accession>P0C551</accession>
<protein>
    <recommendedName>
        <fullName>Acidic phospholipase A2 KBf-grIB</fullName>
        <shortName>svPLA2</shortName>
        <ecNumber>3.1.1.4</ecNumber>
    </recommendedName>
    <alternativeName>
        <fullName>Phosphatidylcholine 2-acylhydrolase</fullName>
    </alternativeName>
</protein>
<feature type="signal peptide" evidence="1">
    <location>
        <begin position="1" status="less than"/>
        <end status="unknown"/>
    </location>
</feature>
<feature type="propeptide" id="PRO_0000293097" evidence="1">
    <location>
        <begin status="unknown"/>
        <end position="17"/>
    </location>
</feature>
<feature type="chain" id="PRO_0000293098" description="Acidic phospholipase A2 KBf-grIB">
    <location>
        <begin position="18"/>
        <end position="142"/>
    </location>
</feature>
<feature type="active site" evidence="1">
    <location>
        <position position="65"/>
    </location>
</feature>
<feature type="active site" evidence="1">
    <location>
        <position position="116"/>
    </location>
</feature>
<feature type="binding site" evidence="1">
    <location>
        <position position="45"/>
    </location>
    <ligand>
        <name>Ca(2+)</name>
        <dbReference type="ChEBI" id="CHEBI:29108"/>
    </ligand>
</feature>
<feature type="binding site" evidence="1">
    <location>
        <position position="47"/>
    </location>
    <ligand>
        <name>Ca(2+)</name>
        <dbReference type="ChEBI" id="CHEBI:29108"/>
    </ligand>
</feature>
<feature type="binding site" evidence="1">
    <location>
        <position position="49"/>
    </location>
    <ligand>
        <name>Ca(2+)</name>
        <dbReference type="ChEBI" id="CHEBI:29108"/>
    </ligand>
</feature>
<feature type="binding site" evidence="1">
    <location>
        <position position="66"/>
    </location>
    <ligand>
        <name>Ca(2+)</name>
        <dbReference type="ChEBI" id="CHEBI:29108"/>
    </ligand>
</feature>
<feature type="disulfide bond" evidence="1">
    <location>
        <begin position="28"/>
        <end position="94"/>
    </location>
</feature>
<feature type="disulfide bond" evidence="1">
    <location>
        <begin position="44"/>
        <end position="141"/>
    </location>
</feature>
<feature type="disulfide bond" evidence="1">
    <location>
        <begin position="46"/>
        <end position="62"/>
    </location>
</feature>
<feature type="disulfide bond" evidence="1">
    <location>
        <begin position="61"/>
        <end position="122"/>
    </location>
</feature>
<feature type="disulfide bond" evidence="1">
    <location>
        <begin position="68"/>
        <end position="115"/>
    </location>
</feature>
<feature type="disulfide bond" evidence="1">
    <location>
        <begin position="78"/>
        <end position="108"/>
    </location>
</feature>
<feature type="disulfide bond" evidence="1">
    <location>
        <begin position="101"/>
        <end position="113"/>
    </location>
</feature>
<feature type="non-terminal residue">
    <location>
        <position position="1"/>
    </location>
</feature>
<organism>
    <name type="scientific">Bungarus fasciatus</name>
    <name type="common">Banded krait</name>
    <name type="synonym">Pseudoboa fasciata</name>
    <dbReference type="NCBI Taxonomy" id="8613"/>
    <lineage>
        <taxon>Eukaryota</taxon>
        <taxon>Metazoa</taxon>
        <taxon>Chordata</taxon>
        <taxon>Craniata</taxon>
        <taxon>Vertebrata</taxon>
        <taxon>Euteleostomi</taxon>
        <taxon>Lepidosauria</taxon>
        <taxon>Squamata</taxon>
        <taxon>Bifurcata</taxon>
        <taxon>Unidentata</taxon>
        <taxon>Episquamata</taxon>
        <taxon>Toxicofera</taxon>
        <taxon>Serpentes</taxon>
        <taxon>Colubroidea</taxon>
        <taxon>Elapidae</taxon>
        <taxon>Bungarinae</taxon>
        <taxon>Bungarus</taxon>
    </lineage>
</organism>
<reference key="1">
    <citation type="journal article" date="2007" name="FEBS J.">
        <title>Sequences, geographic variations and molecular phylogeny of venom phospholipases and three-finger toxins of eastern India Bungarus fasciatus and kinetic analyses of its Pro31 phospholipases A2.</title>
        <authorList>
            <person name="Tsai I.-H."/>
            <person name="Tsai H.-Y."/>
            <person name="Saha A."/>
            <person name="Gomes A."/>
        </authorList>
    </citation>
    <scope>NUCLEOTIDE SEQUENCE [MRNA]</scope>
    <scope>TISSUE SPECIFICITY</scope>
    <source>
        <tissue>Venom gland</tissue>
    </source>
</reference>
<comment type="function">
    <text>PLA2 catalyzes the calcium-dependent hydrolysis of the 2-acyl groups in 3-sn-phosphoglycerides.</text>
</comment>
<comment type="catalytic activity">
    <reaction evidence="2 3">
        <text>a 1,2-diacyl-sn-glycero-3-phosphocholine + H2O = a 1-acyl-sn-glycero-3-phosphocholine + a fatty acid + H(+)</text>
        <dbReference type="Rhea" id="RHEA:15801"/>
        <dbReference type="ChEBI" id="CHEBI:15377"/>
        <dbReference type="ChEBI" id="CHEBI:15378"/>
        <dbReference type="ChEBI" id="CHEBI:28868"/>
        <dbReference type="ChEBI" id="CHEBI:57643"/>
        <dbReference type="ChEBI" id="CHEBI:58168"/>
        <dbReference type="EC" id="3.1.1.4"/>
    </reaction>
</comment>
<comment type="cofactor">
    <cofactor evidence="1">
        <name>Ca(2+)</name>
        <dbReference type="ChEBI" id="CHEBI:29108"/>
    </cofactor>
    <text evidence="1">Binds 1 Ca(2+) ion.</text>
</comment>
<comment type="subcellular location">
    <subcellularLocation>
        <location evidence="1">Secreted</location>
    </subcellularLocation>
</comment>
<comment type="tissue specificity">
    <text evidence="4">Expressed by the venom gland.</text>
</comment>
<comment type="similarity">
    <text evidence="5">Belongs to the phospholipase A2 family. Group I subfamily. D49 sub-subfamily.</text>
</comment>
<comment type="caution">
    <text evidence="6">This protein is not found in the crude venom.</text>
</comment>